<evidence type="ECO:0000255" key="1">
    <source>
        <dbReference type="HAMAP-Rule" id="MF_00041"/>
    </source>
</evidence>
<proteinExistence type="inferred from homology"/>
<feature type="chain" id="PRO_0000332832" description="Cysteine--tRNA ligase">
    <location>
        <begin position="1"/>
        <end position="470"/>
    </location>
</feature>
<feature type="short sequence motif" description="'HIGH' region">
    <location>
        <begin position="48"/>
        <end position="58"/>
    </location>
</feature>
<feature type="short sequence motif" description="'KMSKS' region">
    <location>
        <begin position="288"/>
        <end position="292"/>
    </location>
</feature>
<feature type="binding site" evidence="1">
    <location>
        <position position="46"/>
    </location>
    <ligand>
        <name>Zn(2+)</name>
        <dbReference type="ChEBI" id="CHEBI:29105"/>
    </ligand>
</feature>
<feature type="binding site" evidence="1">
    <location>
        <position position="230"/>
    </location>
    <ligand>
        <name>Zn(2+)</name>
        <dbReference type="ChEBI" id="CHEBI:29105"/>
    </ligand>
</feature>
<feature type="binding site" evidence="1">
    <location>
        <position position="255"/>
    </location>
    <ligand>
        <name>Zn(2+)</name>
        <dbReference type="ChEBI" id="CHEBI:29105"/>
    </ligand>
</feature>
<feature type="binding site" evidence="1">
    <location>
        <position position="259"/>
    </location>
    <ligand>
        <name>Zn(2+)</name>
        <dbReference type="ChEBI" id="CHEBI:29105"/>
    </ligand>
</feature>
<feature type="binding site" evidence="1">
    <location>
        <position position="291"/>
    </location>
    <ligand>
        <name>ATP</name>
        <dbReference type="ChEBI" id="CHEBI:30616"/>
    </ligand>
</feature>
<dbReference type="EC" id="6.1.1.16" evidence="1"/>
<dbReference type="EMBL" id="CP000394">
    <property type="protein sequence ID" value="ABI62034.1"/>
    <property type="molecule type" value="Genomic_DNA"/>
</dbReference>
<dbReference type="SMR" id="Q0BT18"/>
<dbReference type="STRING" id="391165.GbCGDNIH1_1136"/>
<dbReference type="KEGG" id="gbe:GbCGDNIH1_1136"/>
<dbReference type="eggNOG" id="COG0215">
    <property type="taxonomic scope" value="Bacteria"/>
</dbReference>
<dbReference type="HOGENOM" id="CLU_013528_0_0_5"/>
<dbReference type="Proteomes" id="UP000001963">
    <property type="component" value="Chromosome"/>
</dbReference>
<dbReference type="GO" id="GO:0005829">
    <property type="term" value="C:cytosol"/>
    <property type="evidence" value="ECO:0007669"/>
    <property type="project" value="TreeGrafter"/>
</dbReference>
<dbReference type="GO" id="GO:0005524">
    <property type="term" value="F:ATP binding"/>
    <property type="evidence" value="ECO:0007669"/>
    <property type="project" value="UniProtKB-UniRule"/>
</dbReference>
<dbReference type="GO" id="GO:0004817">
    <property type="term" value="F:cysteine-tRNA ligase activity"/>
    <property type="evidence" value="ECO:0007669"/>
    <property type="project" value="UniProtKB-UniRule"/>
</dbReference>
<dbReference type="GO" id="GO:0008270">
    <property type="term" value="F:zinc ion binding"/>
    <property type="evidence" value="ECO:0007669"/>
    <property type="project" value="UniProtKB-UniRule"/>
</dbReference>
<dbReference type="GO" id="GO:0006423">
    <property type="term" value="P:cysteinyl-tRNA aminoacylation"/>
    <property type="evidence" value="ECO:0007669"/>
    <property type="project" value="UniProtKB-UniRule"/>
</dbReference>
<dbReference type="CDD" id="cd00672">
    <property type="entry name" value="CysRS_core"/>
    <property type="match status" value="1"/>
</dbReference>
<dbReference type="FunFam" id="3.40.50.620:FF:000068">
    <property type="entry name" value="Cysteine--tRNA ligase"/>
    <property type="match status" value="1"/>
</dbReference>
<dbReference type="Gene3D" id="1.20.120.1910">
    <property type="entry name" value="Cysteine-tRNA ligase, C-terminal anti-codon recognition domain"/>
    <property type="match status" value="1"/>
</dbReference>
<dbReference type="Gene3D" id="3.40.50.620">
    <property type="entry name" value="HUPs"/>
    <property type="match status" value="1"/>
</dbReference>
<dbReference type="HAMAP" id="MF_00041">
    <property type="entry name" value="Cys_tRNA_synth"/>
    <property type="match status" value="1"/>
</dbReference>
<dbReference type="InterPro" id="IPR015803">
    <property type="entry name" value="Cys-tRNA-ligase"/>
</dbReference>
<dbReference type="InterPro" id="IPR015273">
    <property type="entry name" value="Cys-tRNA-synt_Ia_DALR"/>
</dbReference>
<dbReference type="InterPro" id="IPR024909">
    <property type="entry name" value="Cys-tRNA/MSH_ligase"/>
</dbReference>
<dbReference type="InterPro" id="IPR056411">
    <property type="entry name" value="CysS_C"/>
</dbReference>
<dbReference type="InterPro" id="IPR014729">
    <property type="entry name" value="Rossmann-like_a/b/a_fold"/>
</dbReference>
<dbReference type="InterPro" id="IPR032678">
    <property type="entry name" value="tRNA-synt_1_cat_dom"/>
</dbReference>
<dbReference type="InterPro" id="IPR009080">
    <property type="entry name" value="tRNAsynth_Ia_anticodon-bd"/>
</dbReference>
<dbReference type="NCBIfam" id="TIGR00435">
    <property type="entry name" value="cysS"/>
    <property type="match status" value="1"/>
</dbReference>
<dbReference type="PANTHER" id="PTHR10890:SF3">
    <property type="entry name" value="CYSTEINE--TRNA LIGASE, CYTOPLASMIC"/>
    <property type="match status" value="1"/>
</dbReference>
<dbReference type="PANTHER" id="PTHR10890">
    <property type="entry name" value="CYSTEINYL-TRNA SYNTHETASE"/>
    <property type="match status" value="1"/>
</dbReference>
<dbReference type="Pfam" id="PF23493">
    <property type="entry name" value="CysS_C"/>
    <property type="match status" value="1"/>
</dbReference>
<dbReference type="Pfam" id="PF09190">
    <property type="entry name" value="DALR_2"/>
    <property type="match status" value="1"/>
</dbReference>
<dbReference type="Pfam" id="PF01406">
    <property type="entry name" value="tRNA-synt_1e"/>
    <property type="match status" value="1"/>
</dbReference>
<dbReference type="PRINTS" id="PR00983">
    <property type="entry name" value="TRNASYNTHCYS"/>
</dbReference>
<dbReference type="SMART" id="SM00840">
    <property type="entry name" value="DALR_2"/>
    <property type="match status" value="1"/>
</dbReference>
<dbReference type="SUPFAM" id="SSF47323">
    <property type="entry name" value="Anticodon-binding domain of a subclass of class I aminoacyl-tRNA synthetases"/>
    <property type="match status" value="1"/>
</dbReference>
<dbReference type="SUPFAM" id="SSF52374">
    <property type="entry name" value="Nucleotidylyl transferase"/>
    <property type="match status" value="1"/>
</dbReference>
<comment type="catalytic activity">
    <reaction evidence="1">
        <text>tRNA(Cys) + L-cysteine + ATP = L-cysteinyl-tRNA(Cys) + AMP + diphosphate</text>
        <dbReference type="Rhea" id="RHEA:17773"/>
        <dbReference type="Rhea" id="RHEA-COMP:9661"/>
        <dbReference type="Rhea" id="RHEA-COMP:9679"/>
        <dbReference type="ChEBI" id="CHEBI:30616"/>
        <dbReference type="ChEBI" id="CHEBI:33019"/>
        <dbReference type="ChEBI" id="CHEBI:35235"/>
        <dbReference type="ChEBI" id="CHEBI:78442"/>
        <dbReference type="ChEBI" id="CHEBI:78517"/>
        <dbReference type="ChEBI" id="CHEBI:456215"/>
        <dbReference type="EC" id="6.1.1.16"/>
    </reaction>
</comment>
<comment type="cofactor">
    <cofactor evidence="1">
        <name>Zn(2+)</name>
        <dbReference type="ChEBI" id="CHEBI:29105"/>
    </cofactor>
    <text evidence="1">Binds 1 zinc ion per subunit.</text>
</comment>
<comment type="subunit">
    <text evidence="1">Monomer.</text>
</comment>
<comment type="subcellular location">
    <subcellularLocation>
        <location evidence="1">Cytoplasm</location>
    </subcellularLocation>
</comment>
<comment type="similarity">
    <text evidence="1">Belongs to the class-I aminoacyl-tRNA synthetase family.</text>
</comment>
<sequence>MPVDFVGIPAQKADMNQAAFFLYNSATHGREPFRPIDPKHVKIYVCGPTVYDLAHIGNARSMVVFDVLARVLRRLYPRVTYARNITDVDDKINARARESGVSIDEITARTTADFHADMASLGNLPPDIEPRATAHIAEMILLIEKLIAQEHAYETHGEGEGHVLFSVASDPSYGSLSNRSPDELLAGARIDPAPYKKDPGDFVLWKPSADDQPGWDSPWGRGRPGWHIECSAMSWRYLGEDFDIHGGGGDLIFPHHENECAQSRCAFPGSHFAHYWMHSAMLLLDGEKMSKSLGNVLTVRDLLGQADGEAIRLLFLKTHYRGVLDFRYEALKEAGKELDRFYRALQAHPALPDLDETVENPVLEALRDDLNTPQALSLMHGLAYAALGGDALAAAQLKEGGMLMGLFTREAEAWFQRGINPDEIAQRIADRLQARKDRNFAEADRIRNELAEAGILLEDGPSGTTWRRAS</sequence>
<reference key="1">
    <citation type="journal article" date="2007" name="J. Bacteriol.">
        <title>Genome sequence analysis of the emerging human pathogenic acetic acid bacterium Granulibacter bethesdensis.</title>
        <authorList>
            <person name="Greenberg D.E."/>
            <person name="Porcella S.F."/>
            <person name="Zelazny A.M."/>
            <person name="Virtaneva K."/>
            <person name="Sturdevant D.E."/>
            <person name="Kupko J.J. III"/>
            <person name="Barbian K.D."/>
            <person name="Babar A."/>
            <person name="Dorward D.W."/>
            <person name="Holland S.M."/>
        </authorList>
    </citation>
    <scope>NUCLEOTIDE SEQUENCE [LARGE SCALE GENOMIC DNA]</scope>
    <source>
        <strain>ATCC BAA-1260 / CGDNIH1</strain>
    </source>
</reference>
<gene>
    <name evidence="1" type="primary">cysS</name>
    <name type="ordered locus">GbCGDNIH1_1136</name>
</gene>
<organism>
    <name type="scientific">Granulibacter bethesdensis (strain ATCC BAA-1260 / CGDNIH1)</name>
    <dbReference type="NCBI Taxonomy" id="391165"/>
    <lineage>
        <taxon>Bacteria</taxon>
        <taxon>Pseudomonadati</taxon>
        <taxon>Pseudomonadota</taxon>
        <taxon>Alphaproteobacteria</taxon>
        <taxon>Acetobacterales</taxon>
        <taxon>Acetobacteraceae</taxon>
        <taxon>Granulibacter</taxon>
    </lineage>
</organism>
<keyword id="KW-0030">Aminoacyl-tRNA synthetase</keyword>
<keyword id="KW-0067">ATP-binding</keyword>
<keyword id="KW-0963">Cytoplasm</keyword>
<keyword id="KW-0436">Ligase</keyword>
<keyword id="KW-0479">Metal-binding</keyword>
<keyword id="KW-0547">Nucleotide-binding</keyword>
<keyword id="KW-0648">Protein biosynthesis</keyword>
<keyword id="KW-1185">Reference proteome</keyword>
<keyword id="KW-0862">Zinc</keyword>
<accession>Q0BT18</accession>
<name>SYC_GRABC</name>
<protein>
    <recommendedName>
        <fullName evidence="1">Cysteine--tRNA ligase</fullName>
        <ecNumber evidence="1">6.1.1.16</ecNumber>
    </recommendedName>
    <alternativeName>
        <fullName evidence="1">Cysteinyl-tRNA synthetase</fullName>
        <shortName evidence="1">CysRS</shortName>
    </alternativeName>
</protein>